<keyword id="KW-0418">Kinase</keyword>
<keyword id="KW-0547">Nucleotide-binding</keyword>
<keyword id="KW-0723">Serine/threonine-protein kinase</keyword>
<keyword id="KW-0808">Transferase</keyword>
<reference key="1">
    <citation type="journal article" date="2006" name="J. Bacteriol.">
        <title>Pathogenomic sequence analysis of Bacillus cereus and Bacillus thuringiensis isolates closely related to Bacillus anthracis.</title>
        <authorList>
            <person name="Han C.S."/>
            <person name="Xie G."/>
            <person name="Challacombe J.F."/>
            <person name="Altherr M.R."/>
            <person name="Bhotika S.S."/>
            <person name="Bruce D."/>
            <person name="Campbell C.S."/>
            <person name="Campbell M.L."/>
            <person name="Chen J."/>
            <person name="Chertkov O."/>
            <person name="Cleland C."/>
            <person name="Dimitrijevic M."/>
            <person name="Doggett N.A."/>
            <person name="Fawcett J.J."/>
            <person name="Glavina T."/>
            <person name="Goodwin L.A."/>
            <person name="Hill K.K."/>
            <person name="Hitchcock P."/>
            <person name="Jackson P.J."/>
            <person name="Keim P."/>
            <person name="Kewalramani A.R."/>
            <person name="Longmire J."/>
            <person name="Lucas S."/>
            <person name="Malfatti S."/>
            <person name="McMurry K."/>
            <person name="Meincke L.J."/>
            <person name="Misra M."/>
            <person name="Moseman B.L."/>
            <person name="Mundt M."/>
            <person name="Munk A.C."/>
            <person name="Okinaka R.T."/>
            <person name="Parson-Quintana B."/>
            <person name="Reilly L.P."/>
            <person name="Richardson P."/>
            <person name="Robinson D.L."/>
            <person name="Rubin E."/>
            <person name="Saunders E."/>
            <person name="Tapia R."/>
            <person name="Tesmer J.G."/>
            <person name="Thayer N."/>
            <person name="Thompson L.S."/>
            <person name="Tice H."/>
            <person name="Ticknor L.O."/>
            <person name="Wills P.L."/>
            <person name="Brettin T.S."/>
            <person name="Gilna P."/>
        </authorList>
    </citation>
    <scope>NUCLEOTIDE SEQUENCE [LARGE SCALE GENOMIC DNA]</scope>
    <source>
        <strain>97-27</strain>
    </source>
</reference>
<organism>
    <name type="scientific">Bacillus thuringiensis subsp. konkukian (strain 97-27)</name>
    <dbReference type="NCBI Taxonomy" id="281309"/>
    <lineage>
        <taxon>Bacteria</taxon>
        <taxon>Bacillati</taxon>
        <taxon>Bacillota</taxon>
        <taxon>Bacilli</taxon>
        <taxon>Bacillales</taxon>
        <taxon>Bacillaceae</taxon>
        <taxon>Bacillus</taxon>
        <taxon>Bacillus cereus group</taxon>
    </lineage>
</organism>
<gene>
    <name type="ordered locus">BT9727_4034</name>
</gene>
<evidence type="ECO:0000255" key="1">
    <source>
        <dbReference type="HAMAP-Rule" id="MF_00921"/>
    </source>
</evidence>
<accession>Q6HDM4</accession>
<sequence length="270" mass="30334">MDNKIVYVVSDSVGETADLVVRAAMGQFPFAPDIRRVPYVEDTGTLKEVISIAKSNQALICFTLVKPDMRQYLVTEAAKEGVEAYDIIGPLIDQIEEITGQVPRYEPGVVRRLDEEYFKKIEAIEFAVKYDDGRDARGILKADIVLIGISRTSKTPLSQYLAHNKRLKVANVPLVPEVDPPEELYQVAKEKCFGLKITPEKLNHIRKERLKSLGLSDGATYANINRIKEEIDHFENVVSKINCQVIDVSNKAIEETANIIVNAVQNQKMF</sequence>
<feature type="chain" id="PRO_0000196631" description="Putative pyruvate, phosphate dikinase regulatory protein">
    <location>
        <begin position="1"/>
        <end position="270"/>
    </location>
</feature>
<feature type="binding site" evidence="1">
    <location>
        <begin position="148"/>
        <end position="155"/>
    </location>
    <ligand>
        <name>ADP</name>
        <dbReference type="ChEBI" id="CHEBI:456216"/>
    </ligand>
</feature>
<comment type="function">
    <text evidence="1">Bifunctional serine/threonine kinase and phosphorylase involved in the regulation of the pyruvate, phosphate dikinase (PPDK) by catalyzing its phosphorylation/dephosphorylation.</text>
</comment>
<comment type="catalytic activity">
    <reaction evidence="1">
        <text>N(tele)-phospho-L-histidyl/L-threonyl-[pyruvate, phosphate dikinase] + ADP = N(tele)-phospho-L-histidyl/O-phospho-L-threonyl-[pyruvate, phosphate dikinase] + AMP + H(+)</text>
        <dbReference type="Rhea" id="RHEA:43692"/>
        <dbReference type="Rhea" id="RHEA-COMP:10650"/>
        <dbReference type="Rhea" id="RHEA-COMP:10651"/>
        <dbReference type="ChEBI" id="CHEBI:15378"/>
        <dbReference type="ChEBI" id="CHEBI:30013"/>
        <dbReference type="ChEBI" id="CHEBI:61977"/>
        <dbReference type="ChEBI" id="CHEBI:83586"/>
        <dbReference type="ChEBI" id="CHEBI:456215"/>
        <dbReference type="ChEBI" id="CHEBI:456216"/>
        <dbReference type="EC" id="2.7.11.32"/>
    </reaction>
</comment>
<comment type="catalytic activity">
    <reaction evidence="1">
        <text>N(tele)-phospho-L-histidyl/O-phospho-L-threonyl-[pyruvate, phosphate dikinase] + phosphate + H(+) = N(tele)-phospho-L-histidyl/L-threonyl-[pyruvate, phosphate dikinase] + diphosphate</text>
        <dbReference type="Rhea" id="RHEA:43696"/>
        <dbReference type="Rhea" id="RHEA-COMP:10650"/>
        <dbReference type="Rhea" id="RHEA-COMP:10651"/>
        <dbReference type="ChEBI" id="CHEBI:15378"/>
        <dbReference type="ChEBI" id="CHEBI:30013"/>
        <dbReference type="ChEBI" id="CHEBI:33019"/>
        <dbReference type="ChEBI" id="CHEBI:43474"/>
        <dbReference type="ChEBI" id="CHEBI:61977"/>
        <dbReference type="ChEBI" id="CHEBI:83586"/>
        <dbReference type="EC" id="2.7.4.27"/>
    </reaction>
</comment>
<comment type="similarity">
    <text evidence="1">Belongs to the pyruvate, phosphate/water dikinase regulatory protein family. PDRP subfamily.</text>
</comment>
<dbReference type="EC" id="2.7.11.32" evidence="1"/>
<dbReference type="EC" id="2.7.4.27" evidence="1"/>
<dbReference type="EMBL" id="AE017355">
    <property type="protein sequence ID" value="AAT60805.1"/>
    <property type="molecule type" value="Genomic_DNA"/>
</dbReference>
<dbReference type="RefSeq" id="WP_000368943.1">
    <property type="nucleotide sequence ID" value="NC_005957.1"/>
</dbReference>
<dbReference type="RefSeq" id="YP_038352.1">
    <property type="nucleotide sequence ID" value="NC_005957.1"/>
</dbReference>
<dbReference type="SMR" id="Q6HDM4"/>
<dbReference type="KEGG" id="btk:BT9727_4034"/>
<dbReference type="PATRIC" id="fig|281309.8.peg.4304"/>
<dbReference type="HOGENOM" id="CLU_046206_2_1_9"/>
<dbReference type="Proteomes" id="UP000001301">
    <property type="component" value="Chromosome"/>
</dbReference>
<dbReference type="GO" id="GO:0043531">
    <property type="term" value="F:ADP binding"/>
    <property type="evidence" value="ECO:0007669"/>
    <property type="project" value="UniProtKB-UniRule"/>
</dbReference>
<dbReference type="GO" id="GO:0005524">
    <property type="term" value="F:ATP binding"/>
    <property type="evidence" value="ECO:0007669"/>
    <property type="project" value="InterPro"/>
</dbReference>
<dbReference type="GO" id="GO:0016776">
    <property type="term" value="F:phosphotransferase activity, phosphate group as acceptor"/>
    <property type="evidence" value="ECO:0007669"/>
    <property type="project" value="UniProtKB-UniRule"/>
</dbReference>
<dbReference type="GO" id="GO:0004674">
    <property type="term" value="F:protein serine/threonine kinase activity"/>
    <property type="evidence" value="ECO:0007669"/>
    <property type="project" value="UniProtKB-UniRule"/>
</dbReference>
<dbReference type="HAMAP" id="MF_00921">
    <property type="entry name" value="PDRP"/>
    <property type="match status" value="1"/>
</dbReference>
<dbReference type="InterPro" id="IPR005177">
    <property type="entry name" value="Kinase-pyrophosphorylase"/>
</dbReference>
<dbReference type="InterPro" id="IPR026565">
    <property type="entry name" value="PPDK_reg"/>
</dbReference>
<dbReference type="NCBIfam" id="NF003742">
    <property type="entry name" value="PRK05339.1"/>
    <property type="match status" value="1"/>
</dbReference>
<dbReference type="PANTHER" id="PTHR31756">
    <property type="entry name" value="PYRUVATE, PHOSPHATE DIKINASE REGULATORY PROTEIN 1, CHLOROPLASTIC"/>
    <property type="match status" value="1"/>
</dbReference>
<dbReference type="PANTHER" id="PTHR31756:SF3">
    <property type="entry name" value="PYRUVATE, PHOSPHATE DIKINASE REGULATORY PROTEIN 1, CHLOROPLASTIC"/>
    <property type="match status" value="1"/>
</dbReference>
<dbReference type="Pfam" id="PF03618">
    <property type="entry name" value="Kinase-PPPase"/>
    <property type="match status" value="1"/>
</dbReference>
<proteinExistence type="inferred from homology"/>
<name>PDRP_BACHK</name>
<protein>
    <recommendedName>
        <fullName evidence="1">Putative pyruvate, phosphate dikinase regulatory protein</fullName>
        <shortName evidence="1">PPDK regulatory protein</shortName>
        <ecNumber evidence="1">2.7.11.32</ecNumber>
        <ecNumber evidence="1">2.7.4.27</ecNumber>
    </recommendedName>
</protein>